<organism>
    <name type="scientific">Gloeobacter violaceus (strain ATCC 29082 / PCC 7421)</name>
    <dbReference type="NCBI Taxonomy" id="251221"/>
    <lineage>
        <taxon>Bacteria</taxon>
        <taxon>Bacillati</taxon>
        <taxon>Cyanobacteriota</taxon>
        <taxon>Cyanophyceae</taxon>
        <taxon>Gloeobacterales</taxon>
        <taxon>Gloeobacteraceae</taxon>
        <taxon>Gloeobacter</taxon>
    </lineage>
</organism>
<comment type="function">
    <text evidence="1">Ligates lysine onto the cytidine present at position 34 of the AUA codon-specific tRNA(Ile) that contains the anticodon CAU, in an ATP-dependent manner. Cytidine is converted to lysidine, thus changing the amino acid specificity of the tRNA from methionine to isoleucine.</text>
</comment>
<comment type="catalytic activity">
    <reaction evidence="1">
        <text>cytidine(34) in tRNA(Ile2) + L-lysine + ATP = lysidine(34) in tRNA(Ile2) + AMP + diphosphate + H(+)</text>
        <dbReference type="Rhea" id="RHEA:43744"/>
        <dbReference type="Rhea" id="RHEA-COMP:10625"/>
        <dbReference type="Rhea" id="RHEA-COMP:10670"/>
        <dbReference type="ChEBI" id="CHEBI:15378"/>
        <dbReference type="ChEBI" id="CHEBI:30616"/>
        <dbReference type="ChEBI" id="CHEBI:32551"/>
        <dbReference type="ChEBI" id="CHEBI:33019"/>
        <dbReference type="ChEBI" id="CHEBI:82748"/>
        <dbReference type="ChEBI" id="CHEBI:83665"/>
        <dbReference type="ChEBI" id="CHEBI:456215"/>
        <dbReference type="EC" id="6.3.4.19"/>
    </reaction>
</comment>
<comment type="subcellular location">
    <subcellularLocation>
        <location evidence="1">Cytoplasm</location>
    </subcellularLocation>
</comment>
<comment type="domain">
    <text>The N-terminal region contains the highly conserved SGGXDS motif, predicted to be a P-loop motif involved in ATP binding.</text>
</comment>
<comment type="similarity">
    <text evidence="1">Belongs to the tRNA(Ile)-lysidine synthase family.</text>
</comment>
<comment type="sequence caution" evidence="2">
    <conflict type="frameshift">
        <sequence resource="EMBL-CDS" id="BAC88342"/>
    </conflict>
</comment>
<dbReference type="EC" id="6.3.4.19" evidence="1"/>
<dbReference type="EMBL" id="BA000045">
    <property type="protein sequence ID" value="BAC88342.1"/>
    <property type="status" value="ALT_FRAME"/>
    <property type="molecule type" value="Genomic_DNA"/>
</dbReference>
<dbReference type="RefSeq" id="NP_923347.1">
    <property type="nucleotide sequence ID" value="NC_005125.1"/>
</dbReference>
<dbReference type="SMR" id="Q7NNL0"/>
<dbReference type="FunCoup" id="Q7NNL0">
    <property type="interactions" value="17"/>
</dbReference>
<dbReference type="STRING" id="251221.gene:10757873"/>
<dbReference type="EnsemblBacteria" id="BAC88342">
    <property type="protein sequence ID" value="BAC88342"/>
    <property type="gene ID" value="BAC88342"/>
</dbReference>
<dbReference type="KEGG" id="gvi:gll0401"/>
<dbReference type="PATRIC" id="fig|251221.4.peg.407"/>
<dbReference type="eggNOG" id="COG0037">
    <property type="taxonomic scope" value="Bacteria"/>
</dbReference>
<dbReference type="HOGENOM" id="CLU_018869_0_0_3"/>
<dbReference type="InParanoid" id="Q7NNL0"/>
<dbReference type="OrthoDB" id="9807403at2"/>
<dbReference type="PhylomeDB" id="Q7NNL0"/>
<dbReference type="Proteomes" id="UP000000557">
    <property type="component" value="Chromosome"/>
</dbReference>
<dbReference type="GO" id="GO:0005737">
    <property type="term" value="C:cytoplasm"/>
    <property type="evidence" value="ECO:0007669"/>
    <property type="project" value="UniProtKB-SubCell"/>
</dbReference>
<dbReference type="GO" id="GO:0005524">
    <property type="term" value="F:ATP binding"/>
    <property type="evidence" value="ECO:0007669"/>
    <property type="project" value="UniProtKB-UniRule"/>
</dbReference>
<dbReference type="GO" id="GO:0032267">
    <property type="term" value="F:tRNA(Ile)-lysidine synthase activity"/>
    <property type="evidence" value="ECO:0007669"/>
    <property type="project" value="UniProtKB-EC"/>
</dbReference>
<dbReference type="GO" id="GO:0006400">
    <property type="term" value="P:tRNA modification"/>
    <property type="evidence" value="ECO:0007669"/>
    <property type="project" value="UniProtKB-UniRule"/>
</dbReference>
<dbReference type="CDD" id="cd01992">
    <property type="entry name" value="TilS_N"/>
    <property type="match status" value="1"/>
</dbReference>
<dbReference type="Gene3D" id="1.20.59.20">
    <property type="match status" value="1"/>
</dbReference>
<dbReference type="Gene3D" id="3.40.50.620">
    <property type="entry name" value="HUPs"/>
    <property type="match status" value="1"/>
</dbReference>
<dbReference type="HAMAP" id="MF_01161">
    <property type="entry name" value="tRNA_Ile_lys_synt"/>
    <property type="match status" value="1"/>
</dbReference>
<dbReference type="InterPro" id="IPR014729">
    <property type="entry name" value="Rossmann-like_a/b/a_fold"/>
</dbReference>
<dbReference type="InterPro" id="IPR011063">
    <property type="entry name" value="TilS/TtcA_N"/>
</dbReference>
<dbReference type="InterPro" id="IPR012094">
    <property type="entry name" value="tRNA_Ile_lys_synt"/>
</dbReference>
<dbReference type="InterPro" id="IPR012795">
    <property type="entry name" value="tRNA_Ile_lys_synt_N"/>
</dbReference>
<dbReference type="InterPro" id="IPR015262">
    <property type="entry name" value="tRNA_Ile_lys_synt_subst-bd"/>
</dbReference>
<dbReference type="NCBIfam" id="TIGR02432">
    <property type="entry name" value="lysidine_TilS_N"/>
    <property type="match status" value="1"/>
</dbReference>
<dbReference type="PANTHER" id="PTHR43033">
    <property type="entry name" value="TRNA(ILE)-LYSIDINE SYNTHASE-RELATED"/>
    <property type="match status" value="1"/>
</dbReference>
<dbReference type="PANTHER" id="PTHR43033:SF1">
    <property type="entry name" value="TRNA(ILE)-LYSIDINE SYNTHASE-RELATED"/>
    <property type="match status" value="1"/>
</dbReference>
<dbReference type="Pfam" id="PF01171">
    <property type="entry name" value="ATP_bind_3"/>
    <property type="match status" value="1"/>
</dbReference>
<dbReference type="Pfam" id="PF09179">
    <property type="entry name" value="TilS"/>
    <property type="match status" value="1"/>
</dbReference>
<dbReference type="SUPFAM" id="SSF52402">
    <property type="entry name" value="Adenine nucleotide alpha hydrolases-like"/>
    <property type="match status" value="1"/>
</dbReference>
<dbReference type="SUPFAM" id="SSF82829">
    <property type="entry name" value="MesJ substrate recognition domain-like"/>
    <property type="match status" value="1"/>
</dbReference>
<reference key="1">
    <citation type="journal article" date="2003" name="DNA Res.">
        <title>Complete genome structure of Gloeobacter violaceus PCC 7421, a cyanobacterium that lacks thylakoids.</title>
        <authorList>
            <person name="Nakamura Y."/>
            <person name="Kaneko T."/>
            <person name="Sato S."/>
            <person name="Mimuro M."/>
            <person name="Miyashita H."/>
            <person name="Tsuchiya T."/>
            <person name="Sasamoto S."/>
            <person name="Watanabe A."/>
            <person name="Kawashima K."/>
            <person name="Kishida Y."/>
            <person name="Kiyokawa C."/>
            <person name="Kohara M."/>
            <person name="Matsumoto M."/>
            <person name="Matsuno A."/>
            <person name="Nakazaki N."/>
            <person name="Shimpo S."/>
            <person name="Takeuchi C."/>
            <person name="Yamada M."/>
            <person name="Tabata S."/>
        </authorList>
    </citation>
    <scope>NUCLEOTIDE SEQUENCE [LARGE SCALE GENOMIC DNA]</scope>
    <source>
        <strain>ATCC 29082 / PCC 7421</strain>
    </source>
</reference>
<feature type="chain" id="PRO_0000181698" description="tRNA(Ile)-lysidine synthase">
    <location>
        <begin position="1"/>
        <end position="325"/>
    </location>
</feature>
<feature type="binding site" evidence="1">
    <location>
        <begin position="35"/>
        <end position="40"/>
    </location>
    <ligand>
        <name>ATP</name>
        <dbReference type="ChEBI" id="CHEBI:30616"/>
    </ligand>
</feature>
<keyword id="KW-0067">ATP-binding</keyword>
<keyword id="KW-0963">Cytoplasm</keyword>
<keyword id="KW-0436">Ligase</keyword>
<keyword id="KW-0547">Nucleotide-binding</keyword>
<keyword id="KW-1185">Reference proteome</keyword>
<keyword id="KW-0819">tRNA processing</keyword>
<name>TILS_GLOVI</name>
<sequence length="325" mass="36033">MTRWWAAVSDLSLRRRLRPALGLLPPGSGLLVAVSGGQDSLCLLKLLVDLAPERGLHLHVGHLDHRWRPGSERDAQRVAVLCNVWGVPFHLEIARTPPASEAAARAWRYCWLEQIARGLALERVVTGHTLSDRAETVLFNLLRGSGGAGLGSLDWERPLGGGVRLVRPLLGITRAETGAYCLAHHLPICIDESNANLTFRRNRIRLELMPYLREHFNPLVEQTLARTGDILHAESELLESLLDEHWHSLVQEGRLHRNTLAALPLALQRRAVRRWLSVGLGRQPNFEHIAAVLGCLSAPNRTRTSPLAHSLLVEVQGEWLGLVGG</sequence>
<evidence type="ECO:0000255" key="1">
    <source>
        <dbReference type="HAMAP-Rule" id="MF_01161"/>
    </source>
</evidence>
<evidence type="ECO:0000305" key="2"/>
<gene>
    <name evidence="1" type="primary">tilS</name>
    <name type="ordered locus">gll0401</name>
</gene>
<proteinExistence type="inferred from homology"/>
<accession>Q7NNL0</accession>
<protein>
    <recommendedName>
        <fullName evidence="1">tRNA(Ile)-lysidine synthase</fullName>
        <ecNumber evidence="1">6.3.4.19</ecNumber>
    </recommendedName>
    <alternativeName>
        <fullName evidence="1">tRNA(Ile)-2-lysyl-cytidine synthase</fullName>
    </alternativeName>
    <alternativeName>
        <fullName evidence="1">tRNA(Ile)-lysidine synthetase</fullName>
    </alternativeName>
</protein>